<comment type="function">
    <text evidence="1">Catalyzes the reversible phosphatidyl group transfer from one phosphatidylglycerol molecule to another to form cardiolipin (CL) (diphosphatidylglycerol) and glycerol.</text>
</comment>
<comment type="catalytic activity">
    <reaction evidence="1">
        <text>2 a 1,2-diacyl-sn-glycero-3-phospho-(1'-sn-glycerol) = a cardiolipin + glycerol</text>
        <dbReference type="Rhea" id="RHEA:31451"/>
        <dbReference type="ChEBI" id="CHEBI:17754"/>
        <dbReference type="ChEBI" id="CHEBI:62237"/>
        <dbReference type="ChEBI" id="CHEBI:64716"/>
    </reaction>
</comment>
<comment type="subcellular location">
    <subcellularLocation>
        <location evidence="1">Cell inner membrane</location>
        <topology evidence="1">Multi-pass membrane protein</topology>
    </subcellularLocation>
</comment>
<comment type="similarity">
    <text evidence="1">Belongs to the phospholipase D family. Cardiolipin synthase subfamily. ClsA sub-subfamily.</text>
</comment>
<accession>Q8K9P9</accession>
<reference key="1">
    <citation type="journal article" date="2002" name="Science">
        <title>50 million years of genomic stasis in endosymbiotic bacteria.</title>
        <authorList>
            <person name="Tamas I."/>
            <person name="Klasson L."/>
            <person name="Canbaeck B."/>
            <person name="Naeslund A.K."/>
            <person name="Eriksson A.-S."/>
            <person name="Wernegreen J.J."/>
            <person name="Sandstroem J.P."/>
            <person name="Moran N.A."/>
            <person name="Andersson S.G.E."/>
        </authorList>
    </citation>
    <scope>NUCLEOTIDE SEQUENCE [LARGE SCALE GENOMIC DNA]</scope>
    <source>
        <strain>Sg</strain>
    </source>
</reference>
<evidence type="ECO:0000255" key="1">
    <source>
        <dbReference type="HAMAP-Rule" id="MF_00190"/>
    </source>
</evidence>
<keyword id="KW-0997">Cell inner membrane</keyword>
<keyword id="KW-1003">Cell membrane</keyword>
<keyword id="KW-0444">Lipid biosynthesis</keyword>
<keyword id="KW-0443">Lipid metabolism</keyword>
<keyword id="KW-0472">Membrane</keyword>
<keyword id="KW-0594">Phospholipid biosynthesis</keyword>
<keyword id="KW-1208">Phospholipid metabolism</keyword>
<keyword id="KW-0677">Repeat</keyword>
<keyword id="KW-0808">Transferase</keyword>
<keyword id="KW-0812">Transmembrane</keyword>
<keyword id="KW-1133">Transmembrane helix</keyword>
<feature type="chain" id="PRO_0000201250" description="Cardiolipin synthase A">
    <location>
        <begin position="1"/>
        <end position="486"/>
    </location>
</feature>
<feature type="transmembrane region" description="Helical" evidence="1">
    <location>
        <begin position="3"/>
        <end position="23"/>
    </location>
</feature>
<feature type="transmembrane region" description="Helical" evidence="1">
    <location>
        <begin position="38"/>
        <end position="58"/>
    </location>
</feature>
<feature type="domain" description="PLD phosphodiesterase 1" evidence="1">
    <location>
        <begin position="219"/>
        <end position="246"/>
    </location>
</feature>
<feature type="domain" description="PLD phosphodiesterase 2" evidence="1">
    <location>
        <begin position="399"/>
        <end position="426"/>
    </location>
</feature>
<feature type="active site" evidence="1">
    <location>
        <position position="224"/>
    </location>
</feature>
<feature type="active site" evidence="1">
    <location>
        <position position="226"/>
    </location>
</feature>
<feature type="active site" evidence="1">
    <location>
        <position position="231"/>
    </location>
</feature>
<feature type="active site" evidence="1">
    <location>
        <position position="404"/>
    </location>
</feature>
<feature type="active site" evidence="1">
    <location>
        <position position="406"/>
    </location>
</feature>
<feature type="active site" evidence="1">
    <location>
        <position position="411"/>
    </location>
</feature>
<organism>
    <name type="scientific">Buchnera aphidicola subsp. Schizaphis graminum (strain Sg)</name>
    <dbReference type="NCBI Taxonomy" id="198804"/>
    <lineage>
        <taxon>Bacteria</taxon>
        <taxon>Pseudomonadati</taxon>
        <taxon>Pseudomonadota</taxon>
        <taxon>Gammaproteobacteria</taxon>
        <taxon>Enterobacterales</taxon>
        <taxon>Erwiniaceae</taxon>
        <taxon>Buchnera</taxon>
    </lineage>
</organism>
<gene>
    <name evidence="1" type="primary">clsA</name>
    <name type="synonym">cls</name>
    <name type="ordered locus">BUsg_262</name>
</gene>
<proteinExistence type="inferred from homology"/>
<protein>
    <recommendedName>
        <fullName evidence="1">Cardiolipin synthase A</fullName>
        <shortName evidence="1">CL synthase</shortName>
        <ecNumber evidence="1">2.7.8.-</ecNumber>
    </recommendedName>
</protein>
<dbReference type="EC" id="2.7.8.-" evidence="1"/>
<dbReference type="EMBL" id="AE013218">
    <property type="protein sequence ID" value="AAM67820.1"/>
    <property type="molecule type" value="Genomic_DNA"/>
</dbReference>
<dbReference type="RefSeq" id="WP_011053787.1">
    <property type="nucleotide sequence ID" value="NC_004061.1"/>
</dbReference>
<dbReference type="SMR" id="Q8K9P9"/>
<dbReference type="STRING" id="198804.BUsg_262"/>
<dbReference type="GeneID" id="93003732"/>
<dbReference type="KEGG" id="bas:BUsg_262"/>
<dbReference type="eggNOG" id="COG1502">
    <property type="taxonomic scope" value="Bacteria"/>
</dbReference>
<dbReference type="HOGENOM" id="CLU_038053_1_0_6"/>
<dbReference type="Proteomes" id="UP000000416">
    <property type="component" value="Chromosome"/>
</dbReference>
<dbReference type="GO" id="GO:0005886">
    <property type="term" value="C:plasma membrane"/>
    <property type="evidence" value="ECO:0007669"/>
    <property type="project" value="UniProtKB-SubCell"/>
</dbReference>
<dbReference type="GO" id="GO:0008808">
    <property type="term" value="F:cardiolipin synthase activity"/>
    <property type="evidence" value="ECO:0007669"/>
    <property type="project" value="InterPro"/>
</dbReference>
<dbReference type="GO" id="GO:0032049">
    <property type="term" value="P:cardiolipin biosynthetic process"/>
    <property type="evidence" value="ECO:0007669"/>
    <property type="project" value="InterPro"/>
</dbReference>
<dbReference type="CDD" id="cd09152">
    <property type="entry name" value="PLDc_EcCLS_like_1"/>
    <property type="match status" value="1"/>
</dbReference>
<dbReference type="CDD" id="cd09158">
    <property type="entry name" value="PLDc_EcCLS_like_2"/>
    <property type="match status" value="1"/>
</dbReference>
<dbReference type="FunFam" id="3.30.870.10:FF:000003">
    <property type="entry name" value="Cardiolipin synthase A"/>
    <property type="match status" value="1"/>
</dbReference>
<dbReference type="Gene3D" id="3.30.870.10">
    <property type="entry name" value="Endonuclease Chain A"/>
    <property type="match status" value="2"/>
</dbReference>
<dbReference type="HAMAP" id="MF_00190">
    <property type="entry name" value="Cardiolipin_synth_ClsA"/>
    <property type="match status" value="1"/>
</dbReference>
<dbReference type="InterPro" id="IPR022924">
    <property type="entry name" value="Cardiolipin_synthase"/>
</dbReference>
<dbReference type="InterPro" id="IPR030840">
    <property type="entry name" value="CL_synthase_A"/>
</dbReference>
<dbReference type="InterPro" id="IPR025202">
    <property type="entry name" value="PLD-like_dom"/>
</dbReference>
<dbReference type="InterPro" id="IPR001736">
    <property type="entry name" value="PLipase_D/transphosphatidylase"/>
</dbReference>
<dbReference type="NCBIfam" id="TIGR04265">
    <property type="entry name" value="bac_cardiolipin"/>
    <property type="match status" value="1"/>
</dbReference>
<dbReference type="PANTHER" id="PTHR21248">
    <property type="entry name" value="CARDIOLIPIN SYNTHASE"/>
    <property type="match status" value="1"/>
</dbReference>
<dbReference type="PANTHER" id="PTHR21248:SF22">
    <property type="entry name" value="PHOSPHOLIPASE D"/>
    <property type="match status" value="1"/>
</dbReference>
<dbReference type="Pfam" id="PF13091">
    <property type="entry name" value="PLDc_2"/>
    <property type="match status" value="2"/>
</dbReference>
<dbReference type="SMART" id="SM00155">
    <property type="entry name" value="PLDc"/>
    <property type="match status" value="2"/>
</dbReference>
<dbReference type="SUPFAM" id="SSF56024">
    <property type="entry name" value="Phospholipase D/nuclease"/>
    <property type="match status" value="2"/>
</dbReference>
<dbReference type="PROSITE" id="PS50035">
    <property type="entry name" value="PLD"/>
    <property type="match status" value="2"/>
</dbReference>
<name>CLSA_BUCAP</name>
<sequence length="486" mass="56293">MDIFYDLIKWLVVLIYWLLIANITYRILIKRRSIPSSMSWLLTIYIIPFIGIAIWFFFGELYLGKRQKKIAKKIWSISNTYLNKLKSYKYIFQIKNSEVATSLFQLCKHRQGIYGIKNNKITLLTNTQNTIEVLIRDIYSARNNIEMVFYIWKPGGIADDVAMALIDSAKRGVHCRLMLDSAGSVEFFRSPWFDIMKKSGIEIVEALKVSLIRIFLRRLDVRQHRKIILIDNYISYSGSMNLVDPYLFKQSSGVGQWIDLMTRIEGPVATAIGIIYSCDWEIETGFKILPKLPNKEMLKKKCNQNSSIQVIASGPGFPKNVIHQALLTAIYSARNELIMTTPYLVPSDDLLHAICTAAQRGVKVSIIIPLYHDSILVKWASRVFFSELLEAGVKIYQFKKGLLHSKSILIDQQLSLIGTVNLDMRSLWLNFEITLVIDDRKFSHHLSAIQKEYIDNSRLLDKNTWSMRAYWTRILEKIFYFLSPLL</sequence>